<reference key="1">
    <citation type="journal article" date="2012" name="BMC Genomics">
        <title>Comparative genomics and transcriptomics of lineages I, II, and III strains of Listeria monocytogenes.</title>
        <authorList>
            <person name="Hain T."/>
            <person name="Ghai R."/>
            <person name="Billion A."/>
            <person name="Kuenne C.T."/>
            <person name="Steinweg C."/>
            <person name="Izar B."/>
            <person name="Mohamed W."/>
            <person name="Mraheil M."/>
            <person name="Domann E."/>
            <person name="Schaffrath S."/>
            <person name="Karst U."/>
            <person name="Goesmann A."/>
            <person name="Oehm S."/>
            <person name="Puhler A."/>
            <person name="Merkl R."/>
            <person name="Vorwerk S."/>
            <person name="Glaser P."/>
            <person name="Garrido P."/>
            <person name="Rusniok C."/>
            <person name="Buchrieser C."/>
            <person name="Goebel W."/>
            <person name="Chakraborty T."/>
        </authorList>
    </citation>
    <scope>NUCLEOTIDE SEQUENCE [LARGE SCALE GENOMIC DNA]</scope>
    <source>
        <strain>CLIP80459</strain>
    </source>
</reference>
<feature type="chain" id="PRO_1000205457" description="UPF0154 protein Lm4b_01315">
    <location>
        <begin position="1"/>
        <end position="79"/>
    </location>
</feature>
<feature type="transmembrane region" description="Helical" evidence="1">
    <location>
        <begin position="2"/>
        <end position="22"/>
    </location>
</feature>
<feature type="region of interest" description="Disordered" evidence="2">
    <location>
        <begin position="57"/>
        <end position="79"/>
    </location>
</feature>
<feature type="compositionally biased region" description="Polar residues" evidence="2">
    <location>
        <begin position="57"/>
        <end position="66"/>
    </location>
</feature>
<organism>
    <name type="scientific">Listeria monocytogenes serotype 4b (strain CLIP80459)</name>
    <dbReference type="NCBI Taxonomy" id="568819"/>
    <lineage>
        <taxon>Bacteria</taxon>
        <taxon>Bacillati</taxon>
        <taxon>Bacillota</taxon>
        <taxon>Bacilli</taxon>
        <taxon>Bacillales</taxon>
        <taxon>Listeriaceae</taxon>
        <taxon>Listeria</taxon>
    </lineage>
</organism>
<dbReference type="EMBL" id="FM242711">
    <property type="protein sequence ID" value="CAS05079.1"/>
    <property type="molecule type" value="Genomic_DNA"/>
</dbReference>
<dbReference type="RefSeq" id="WP_003726667.1">
    <property type="nucleotide sequence ID" value="NC_012488.1"/>
</dbReference>
<dbReference type="SMR" id="C1L2L3"/>
<dbReference type="KEGG" id="lmc:Lm4b_01315"/>
<dbReference type="HOGENOM" id="CLU_180108_0_1_9"/>
<dbReference type="GO" id="GO:0005886">
    <property type="term" value="C:plasma membrane"/>
    <property type="evidence" value="ECO:0007669"/>
    <property type="project" value="UniProtKB-SubCell"/>
</dbReference>
<dbReference type="HAMAP" id="MF_00363">
    <property type="entry name" value="UPF0154"/>
    <property type="match status" value="1"/>
</dbReference>
<dbReference type="InterPro" id="IPR005359">
    <property type="entry name" value="UPF0154"/>
</dbReference>
<dbReference type="NCBIfam" id="NF002503">
    <property type="entry name" value="PRK01844.1"/>
    <property type="match status" value="1"/>
</dbReference>
<dbReference type="Pfam" id="PF03672">
    <property type="entry name" value="UPF0154"/>
    <property type="match status" value="1"/>
</dbReference>
<accession>C1L2L3</accession>
<keyword id="KW-1003">Cell membrane</keyword>
<keyword id="KW-0472">Membrane</keyword>
<keyword id="KW-0812">Transmembrane</keyword>
<keyword id="KW-1133">Transmembrane helix</keyword>
<comment type="subcellular location">
    <subcellularLocation>
        <location evidence="1">Cell membrane</location>
        <topology evidence="1">Single-pass membrane protein</topology>
    </subcellularLocation>
</comment>
<comment type="similarity">
    <text evidence="1">Belongs to the UPF0154 family.</text>
</comment>
<sequence>MWIYILVGIICLLAGLAGGFFIARRYMMSYLKNNPPINEQMLQMMMAQMGQKPSQKKINQMMSAMNKQQEKEKPKKTKK</sequence>
<name>Y1315_LISMC</name>
<protein>
    <recommendedName>
        <fullName evidence="1">UPF0154 protein Lm4b_01315</fullName>
    </recommendedName>
</protein>
<evidence type="ECO:0000255" key="1">
    <source>
        <dbReference type="HAMAP-Rule" id="MF_00363"/>
    </source>
</evidence>
<evidence type="ECO:0000256" key="2">
    <source>
        <dbReference type="SAM" id="MobiDB-lite"/>
    </source>
</evidence>
<proteinExistence type="inferred from homology"/>
<gene>
    <name type="ordered locus">Lm4b_01315</name>
</gene>